<feature type="chain" id="PRO_0000286862" description="E3 ubiquitin-protein ligase UBR4">
    <location>
        <begin position="1"/>
        <end position="5180"/>
    </location>
</feature>
<feature type="domain" description="UZI" evidence="4">
    <location>
        <begin position="4949"/>
        <end position="5179"/>
    </location>
</feature>
<feature type="zinc finger region" description="UBR-type" evidence="3">
    <location>
        <begin position="1655"/>
        <end position="1728"/>
    </location>
</feature>
<feature type="zinc finger region" description="HemiRING-type" evidence="4">
    <location>
        <begin position="4832"/>
        <end position="4946"/>
    </location>
</feature>
<feature type="region of interest" description="Disordered" evidence="5">
    <location>
        <begin position="1"/>
        <end position="26"/>
    </location>
</feature>
<feature type="region of interest" description="Disordered" evidence="5">
    <location>
        <begin position="205"/>
        <end position="228"/>
    </location>
</feature>
<feature type="region of interest" description="Disordered" evidence="5">
    <location>
        <begin position="549"/>
        <end position="588"/>
    </location>
</feature>
<feature type="region of interest" description="Disordered" evidence="5">
    <location>
        <begin position="601"/>
        <end position="639"/>
    </location>
</feature>
<feature type="region of interest" description="Disordered" evidence="5">
    <location>
        <begin position="2429"/>
        <end position="2466"/>
    </location>
</feature>
<feature type="region of interest" description="Disordered" evidence="5">
    <location>
        <begin position="2708"/>
        <end position="2761"/>
    </location>
</feature>
<feature type="region of interest" description="Disordered" evidence="5">
    <location>
        <begin position="2830"/>
        <end position="2963"/>
    </location>
</feature>
<feature type="region of interest" description="Disordered" evidence="5">
    <location>
        <begin position="3344"/>
        <end position="3383"/>
    </location>
</feature>
<feature type="region of interest" description="UBR4 E3 catalytic module" evidence="4">
    <location>
        <begin position="4714"/>
        <end position="5179"/>
    </location>
</feature>
<feature type="compositionally biased region" description="Low complexity" evidence="5">
    <location>
        <begin position="1"/>
        <end position="20"/>
    </location>
</feature>
<feature type="compositionally biased region" description="Low complexity" evidence="5">
    <location>
        <begin position="555"/>
        <end position="566"/>
    </location>
</feature>
<feature type="compositionally biased region" description="Acidic residues" evidence="5">
    <location>
        <begin position="570"/>
        <end position="588"/>
    </location>
</feature>
<feature type="compositionally biased region" description="Pro residues" evidence="5">
    <location>
        <begin position="607"/>
        <end position="618"/>
    </location>
</feature>
<feature type="compositionally biased region" description="Polar residues" evidence="5">
    <location>
        <begin position="2441"/>
        <end position="2466"/>
    </location>
</feature>
<feature type="compositionally biased region" description="Polar residues" evidence="5">
    <location>
        <begin position="2713"/>
        <end position="2722"/>
    </location>
</feature>
<feature type="compositionally biased region" description="Acidic residues" evidence="5">
    <location>
        <begin position="2726"/>
        <end position="2735"/>
    </location>
</feature>
<feature type="compositionally biased region" description="Basic and acidic residues" evidence="5">
    <location>
        <begin position="2747"/>
        <end position="2761"/>
    </location>
</feature>
<feature type="compositionally biased region" description="Low complexity" evidence="5">
    <location>
        <begin position="2830"/>
        <end position="2852"/>
    </location>
</feature>
<feature type="compositionally biased region" description="Polar residues" evidence="5">
    <location>
        <begin position="2871"/>
        <end position="2881"/>
    </location>
</feature>
<feature type="compositionally biased region" description="Low complexity" evidence="5">
    <location>
        <begin position="2895"/>
        <end position="2905"/>
    </location>
</feature>
<feature type="compositionally biased region" description="Low complexity" evidence="5">
    <location>
        <begin position="2928"/>
        <end position="2942"/>
    </location>
</feature>
<feature type="compositionally biased region" description="Acidic residues" evidence="5">
    <location>
        <begin position="2947"/>
        <end position="2958"/>
    </location>
</feature>
<feature type="compositionally biased region" description="Low complexity" evidence="5">
    <location>
        <begin position="3344"/>
        <end position="3362"/>
    </location>
</feature>
<feature type="compositionally biased region" description="Basic and acidic residues" evidence="5">
    <location>
        <begin position="3368"/>
        <end position="3379"/>
    </location>
</feature>
<feature type="binding site" evidence="2">
    <location>
        <position position="1661"/>
    </location>
    <ligand>
        <name>Zn(2+)</name>
        <dbReference type="ChEBI" id="CHEBI:29105"/>
        <label>1</label>
    </ligand>
</feature>
<feature type="binding site" evidence="2">
    <location>
        <position position="1678"/>
    </location>
    <ligand>
        <name>Zn(2+)</name>
        <dbReference type="ChEBI" id="CHEBI:29105"/>
        <label>2</label>
    </ligand>
</feature>
<feature type="binding site" evidence="2">
    <location>
        <position position="1681"/>
    </location>
    <ligand>
        <name>Zn(2+)</name>
        <dbReference type="ChEBI" id="CHEBI:29105"/>
        <label>2</label>
    </ligand>
</feature>
<feature type="binding site" evidence="2">
    <location>
        <position position="1690"/>
    </location>
    <ligand>
        <name>Zn(2+)</name>
        <dbReference type="ChEBI" id="CHEBI:29105"/>
        <label>1</label>
    </ligand>
</feature>
<feature type="binding site" evidence="2">
    <location>
        <position position="1693"/>
    </location>
    <ligand>
        <name>Zn(2+)</name>
        <dbReference type="ChEBI" id="CHEBI:29105"/>
        <label>1</label>
    </ligand>
</feature>
<feature type="binding site" evidence="2">
    <location>
        <position position="1693"/>
    </location>
    <ligand>
        <name>Zn(2+)</name>
        <dbReference type="ChEBI" id="CHEBI:29105"/>
        <label>3</label>
    </ligand>
</feature>
<feature type="binding site" evidence="2">
    <location>
        <position position="1697"/>
    </location>
    <ligand>
        <name>Zn(2+)</name>
        <dbReference type="ChEBI" id="CHEBI:29105"/>
        <label>3</label>
    </ligand>
</feature>
<feature type="binding site" evidence="2">
    <location>
        <position position="1698"/>
    </location>
    <ligand>
        <name>Zn(2+)</name>
        <dbReference type="ChEBI" id="CHEBI:29105"/>
        <label>2</label>
    </ligand>
</feature>
<feature type="binding site" evidence="2">
    <location>
        <position position="1701"/>
    </location>
    <ligand>
        <name>Zn(2+)</name>
        <dbReference type="ChEBI" id="CHEBI:29105"/>
        <label>2</label>
    </ligand>
</feature>
<feature type="binding site" evidence="2">
    <location>
        <position position="1713"/>
    </location>
    <ligand>
        <name>Zn(2+)</name>
        <dbReference type="ChEBI" id="CHEBI:29105"/>
        <label>1</label>
    </ligand>
</feature>
<feature type="binding site" evidence="2">
    <location>
        <position position="1715"/>
    </location>
    <ligand>
        <name>Zn(2+)</name>
        <dbReference type="ChEBI" id="CHEBI:29105"/>
        <label>3</label>
    </ligand>
</feature>
<feature type="binding site" evidence="2">
    <location>
        <position position="1723"/>
    </location>
    <ligand>
        <name>Zn(2+)</name>
        <dbReference type="ChEBI" id="CHEBI:29105"/>
        <label>3</label>
    </ligand>
</feature>
<feature type="binding site" evidence="4">
    <location>
        <position position="4835"/>
    </location>
    <ligand>
        <name>Zn(2+)</name>
        <dbReference type="ChEBI" id="CHEBI:29105"/>
        <label>4</label>
    </ligand>
</feature>
<feature type="binding site" evidence="4">
    <location>
        <position position="4838"/>
    </location>
    <ligand>
        <name>Zn(2+)</name>
        <dbReference type="ChEBI" id="CHEBI:29105"/>
        <label>4</label>
    </ligand>
</feature>
<feature type="binding site" evidence="4">
    <location>
        <position position="4884"/>
    </location>
    <ligand>
        <name>Zn(2+)</name>
        <dbReference type="ChEBI" id="CHEBI:29105"/>
        <label>4</label>
    </ligand>
</feature>
<feature type="binding site" evidence="4">
    <location>
        <position position="4887"/>
    </location>
    <ligand>
        <name>Zn(2+)</name>
        <dbReference type="ChEBI" id="CHEBI:29105"/>
        <label>4</label>
    </ligand>
</feature>
<feature type="modified residue" description="Phosphoserine" evidence="15">
    <location>
        <position position="178"/>
    </location>
</feature>
<feature type="modified residue" description="Phosphoserine" evidence="15">
    <location>
        <position position="181"/>
    </location>
</feature>
<feature type="modified residue" description="Phosphoserine" evidence="15">
    <location>
        <position position="212"/>
    </location>
</feature>
<feature type="modified residue" description="Phosphotyrosine" evidence="15">
    <location>
        <position position="370"/>
    </location>
</feature>
<feature type="modified residue" description="Phosphothreonine" evidence="2">
    <location>
        <position position="905"/>
    </location>
</feature>
<feature type="modified residue" description="N6-acetyllysine" evidence="2">
    <location>
        <position position="1083"/>
    </location>
</feature>
<feature type="modified residue" description="Phosphoserine" evidence="1">
    <location>
        <position position="1401"/>
    </location>
</feature>
<feature type="modified residue" description="Phosphoserine" evidence="2">
    <location>
        <position position="1646"/>
    </location>
</feature>
<feature type="modified residue" description="Phosphoserine" evidence="2">
    <location>
        <position position="1651"/>
    </location>
</feature>
<feature type="modified residue" description="Phosphoserine" evidence="2">
    <location>
        <position position="1746"/>
    </location>
</feature>
<feature type="modified residue" description="Phosphoserine" evidence="1">
    <location>
        <position position="1753"/>
    </location>
</feature>
<feature type="modified residue" description="Phosphoserine" evidence="2">
    <location>
        <position position="1876"/>
    </location>
</feature>
<feature type="modified residue" description="Phosphoserine" evidence="2">
    <location>
        <position position="1902"/>
    </location>
</feature>
<feature type="modified residue" description="Phosphothreonine" evidence="2">
    <location>
        <position position="2712"/>
    </location>
</feature>
<feature type="modified residue" description="Phosphoserine" evidence="2">
    <location>
        <position position="2716"/>
    </location>
</feature>
<feature type="modified residue" description="Phosphoserine" evidence="15">
    <location>
        <position position="2719"/>
    </location>
</feature>
<feature type="modified residue" description="Phosphothreonine" evidence="15">
    <location>
        <position position="2721"/>
    </location>
</feature>
<feature type="modified residue" description="Phosphothreonine" evidence="2">
    <location>
        <position position="2941"/>
    </location>
</feature>
<feature type="modified residue" description="Phosphoserine" evidence="2">
    <location>
        <position position="2949"/>
    </location>
</feature>
<feature type="splice variant" id="VSP_025210" description="In isoform 2." evidence="11">
    <location>
        <begin position="1"/>
        <end position="3159"/>
    </location>
</feature>
<feature type="splice variant" id="VSP_025211" description="In isoform 4." evidence="11">
    <original>HQGFGVLSV</original>
    <variation>CVSACKLHF</variation>
    <location>
        <begin position="466"/>
        <end position="474"/>
    </location>
</feature>
<feature type="splice variant" id="VSP_025212" description="In isoform 4." evidence="11">
    <location>
        <begin position="475"/>
        <end position="5180"/>
    </location>
</feature>
<feature type="splice variant" id="VSP_025213" description="In isoform 3." evidence="12">
    <original>E</original>
    <variation>ESSETESLTKLD</variation>
    <location>
        <position position="2474"/>
    </location>
</feature>
<feature type="splice variant" id="VSP_025214" description="In isoform 5." evidence="13">
    <original>T</original>
    <variation>TDCFSPRCACWNLGIVGILIGAPLETPSA</variation>
    <location>
        <position position="2599"/>
    </location>
</feature>
<feature type="splice variant" id="VSP_025215" description="In isoform 3." evidence="12">
    <location>
        <begin position="2827"/>
        <end position="2861"/>
    </location>
</feature>
<feature type="sequence conflict" description="In Ref. 1; BAC39609." evidence="13" ref="1">
    <original>R</original>
    <variation>K</variation>
    <location>
        <position position="445"/>
    </location>
</feature>
<feature type="modified residue" description="Phosphoserine" evidence="15">
    <location sequence="A2AN08-5">
        <position position="2603"/>
    </location>
</feature>
<dbReference type="EC" id="2.3.2.27" evidence="7"/>
<dbReference type="EMBL" id="AK044277">
    <property type="protein sequence ID" value="BAC31850.1"/>
    <property type="molecule type" value="mRNA"/>
</dbReference>
<dbReference type="EMBL" id="AK080556">
    <property type="protein sequence ID" value="BAC37944.1"/>
    <property type="molecule type" value="mRNA"/>
</dbReference>
<dbReference type="EMBL" id="AK082231">
    <property type="protein sequence ID" value="BAC38442.2"/>
    <property type="status" value="ALT_SEQ"/>
    <property type="molecule type" value="mRNA"/>
</dbReference>
<dbReference type="EMBL" id="AK083644">
    <property type="protein sequence ID" value="BAC38980.2"/>
    <property type="status" value="ALT_SEQ"/>
    <property type="molecule type" value="mRNA"/>
</dbReference>
<dbReference type="EMBL" id="AK086097">
    <property type="protein sequence ID" value="BAC39609.1"/>
    <property type="status" value="ALT_INIT"/>
    <property type="molecule type" value="mRNA"/>
</dbReference>
<dbReference type="EMBL" id="AL807833">
    <property type="status" value="NOT_ANNOTATED_CDS"/>
    <property type="molecule type" value="Genomic_DNA"/>
</dbReference>
<dbReference type="EMBL" id="AB093242">
    <property type="protein sequence ID" value="BAC41426.2"/>
    <property type="molecule type" value="mRNA"/>
</dbReference>
<dbReference type="EMBL" id="BC040468">
    <property type="protein sequence ID" value="AAH40468.1"/>
    <property type="molecule type" value="mRNA"/>
</dbReference>
<dbReference type="EMBL" id="BC051096">
    <property type="protein sequence ID" value="AAH51096.1"/>
    <property type="molecule type" value="mRNA"/>
</dbReference>
<dbReference type="EMBL" id="BC057625">
    <property type="protein sequence ID" value="AAH57625.1"/>
    <property type="molecule type" value="mRNA"/>
</dbReference>
<dbReference type="EMBL" id="BC059890">
    <property type="protein sequence ID" value="AAH59890.1"/>
    <property type="molecule type" value="mRNA"/>
</dbReference>
<dbReference type="EMBL" id="BC094329">
    <property type="protein sequence ID" value="AAH94329.1"/>
    <property type="molecule type" value="mRNA"/>
</dbReference>
<dbReference type="CCDS" id="CCDS51340.1">
    <molecule id="A2AN08-1"/>
</dbReference>
<dbReference type="RefSeq" id="NP_001153791.1">
    <molecule id="A2AN08-1"/>
    <property type="nucleotide sequence ID" value="NM_001160319.1"/>
</dbReference>
<dbReference type="SMR" id="A2AN08"/>
<dbReference type="BioGRID" id="213238">
    <property type="interactions" value="36"/>
</dbReference>
<dbReference type="DIP" id="DIP-61499N"/>
<dbReference type="FunCoup" id="A2AN08">
    <property type="interactions" value="4232"/>
</dbReference>
<dbReference type="IntAct" id="A2AN08">
    <property type="interactions" value="14"/>
</dbReference>
<dbReference type="MINT" id="A2AN08"/>
<dbReference type="STRING" id="10090.ENSMUSP00000095433"/>
<dbReference type="GlyGen" id="A2AN08">
    <property type="glycosylation" value="5 sites, 3 N-linked glycans (3 sites), 1 O-linked glycan (2 sites)"/>
</dbReference>
<dbReference type="iPTMnet" id="A2AN08"/>
<dbReference type="PhosphoSitePlus" id="A2AN08"/>
<dbReference type="SwissPalm" id="A2AN08"/>
<dbReference type="jPOST" id="A2AN08"/>
<dbReference type="PaxDb" id="10090-ENSMUSP00000095433"/>
<dbReference type="PeptideAtlas" id="A2AN08"/>
<dbReference type="ProteomicsDB" id="298371">
    <molecule id="A2AN08-1"/>
</dbReference>
<dbReference type="ProteomicsDB" id="298372">
    <molecule id="A2AN08-2"/>
</dbReference>
<dbReference type="ProteomicsDB" id="298373">
    <molecule id="A2AN08-3"/>
</dbReference>
<dbReference type="ProteomicsDB" id="298374">
    <molecule id="A2AN08-4"/>
</dbReference>
<dbReference type="ProteomicsDB" id="298375">
    <molecule id="A2AN08-5"/>
</dbReference>
<dbReference type="Pumba" id="A2AN08"/>
<dbReference type="Antibodypedia" id="2856">
    <property type="antibodies" value="129 antibodies from 27 providers"/>
</dbReference>
<dbReference type="Ensembl" id="ENSMUST00000097822.10">
    <molecule id="A2AN08-1"/>
    <property type="protein sequence ID" value="ENSMUSP00000095433.4"/>
    <property type="gene ID" value="ENSMUSG00000066036.15"/>
</dbReference>
<dbReference type="Ensembl" id="ENSMUST00000165860.8">
    <molecule id="A2AN08-3"/>
    <property type="protein sequence ID" value="ENSMUSP00000125800.2"/>
    <property type="gene ID" value="ENSMUSG00000066036.15"/>
</dbReference>
<dbReference type="GeneID" id="69116"/>
<dbReference type="KEGG" id="mmu:69116"/>
<dbReference type="UCSC" id="uc008vmj.2">
    <molecule id="A2AN08-4"/>
    <property type="organism name" value="mouse"/>
</dbReference>
<dbReference type="UCSC" id="uc008vmm.2">
    <molecule id="A2AN08-1"/>
    <property type="organism name" value="mouse"/>
</dbReference>
<dbReference type="AGR" id="MGI:1916366"/>
<dbReference type="CTD" id="23352"/>
<dbReference type="MGI" id="MGI:1916366">
    <property type="gene designation" value="Ubr4"/>
</dbReference>
<dbReference type="VEuPathDB" id="HostDB:ENSMUSG00000066036"/>
<dbReference type="eggNOG" id="KOG1776">
    <property type="taxonomic scope" value="Eukaryota"/>
</dbReference>
<dbReference type="GeneTree" id="ENSGT00600000084471"/>
<dbReference type="HOGENOM" id="CLU_000069_0_0_1"/>
<dbReference type="InParanoid" id="A2AN08"/>
<dbReference type="OMA" id="VHRMEEH"/>
<dbReference type="OrthoDB" id="30336at2759"/>
<dbReference type="PhylomeDB" id="A2AN08"/>
<dbReference type="TreeFam" id="TF314406"/>
<dbReference type="Reactome" id="R-MMU-6798695">
    <property type="pathway name" value="Neutrophil degranulation"/>
</dbReference>
<dbReference type="Reactome" id="R-MMU-983168">
    <property type="pathway name" value="Antigen processing: Ubiquitination &amp; Proteasome degradation"/>
</dbReference>
<dbReference type="UniPathway" id="UPA00143"/>
<dbReference type="BioGRID-ORCS" id="69116">
    <property type="hits" value="24 hits in 81 CRISPR screens"/>
</dbReference>
<dbReference type="ChiTaRS" id="Ubr4">
    <property type="organism name" value="mouse"/>
</dbReference>
<dbReference type="PRO" id="PR:A2AN08"/>
<dbReference type="Proteomes" id="UP000000589">
    <property type="component" value="Chromosome 4"/>
</dbReference>
<dbReference type="RNAct" id="A2AN08">
    <property type="molecule type" value="protein"/>
</dbReference>
<dbReference type="Bgee" id="ENSMUSG00000066036">
    <property type="expression patterns" value="Expressed in entorhinal cortex and 273 other cell types or tissues"/>
</dbReference>
<dbReference type="ExpressionAtlas" id="A2AN08">
    <property type="expression patterns" value="baseline and differential"/>
</dbReference>
<dbReference type="GO" id="GO:0005856">
    <property type="term" value="C:cytoskeleton"/>
    <property type="evidence" value="ECO:0007669"/>
    <property type="project" value="UniProtKB-SubCell"/>
</dbReference>
<dbReference type="GO" id="GO:0005768">
    <property type="term" value="C:endosome"/>
    <property type="evidence" value="ECO:0000314"/>
    <property type="project" value="UniProtKB"/>
</dbReference>
<dbReference type="GO" id="GO:0005634">
    <property type="term" value="C:nucleus"/>
    <property type="evidence" value="ECO:0007669"/>
    <property type="project" value="UniProtKB-SubCell"/>
</dbReference>
<dbReference type="GO" id="GO:0005516">
    <property type="term" value="F:calmodulin binding"/>
    <property type="evidence" value="ECO:0000314"/>
    <property type="project" value="UniProtKB"/>
</dbReference>
<dbReference type="GO" id="GO:0061630">
    <property type="term" value="F:ubiquitin protein ligase activity"/>
    <property type="evidence" value="ECO:0000314"/>
    <property type="project" value="UniProtKB"/>
</dbReference>
<dbReference type="GO" id="GO:0008270">
    <property type="term" value="F:zinc ion binding"/>
    <property type="evidence" value="ECO:0007669"/>
    <property type="project" value="UniProtKB-KW"/>
</dbReference>
<dbReference type="GO" id="GO:0140455">
    <property type="term" value="P:cytoplasm protein quality control"/>
    <property type="evidence" value="ECO:0000250"/>
    <property type="project" value="UniProtKB"/>
</dbReference>
<dbReference type="GO" id="GO:0071629">
    <property type="term" value="P:cytoplasm protein quality control by the ubiquitin-proteasome system"/>
    <property type="evidence" value="ECO:0000250"/>
    <property type="project" value="UniProtKB"/>
</dbReference>
<dbReference type="GO" id="GO:0007032">
    <property type="term" value="P:endosome organization"/>
    <property type="evidence" value="ECO:0000314"/>
    <property type="project" value="UniProtKB"/>
</dbReference>
<dbReference type="GO" id="GO:0045717">
    <property type="term" value="P:negative regulation of fatty acid biosynthetic process"/>
    <property type="evidence" value="ECO:0007669"/>
    <property type="project" value="Ensembl"/>
</dbReference>
<dbReference type="GO" id="GO:0141191">
    <property type="term" value="P:negative regulation of HRI-mediated signaling"/>
    <property type="evidence" value="ECO:0000250"/>
    <property type="project" value="UniProtKB"/>
</dbReference>
<dbReference type="GO" id="GO:0010508">
    <property type="term" value="P:positive regulation of autophagy"/>
    <property type="evidence" value="ECO:0000315"/>
    <property type="project" value="UniProtKB"/>
</dbReference>
<dbReference type="GO" id="GO:0141198">
    <property type="term" value="P:protein branched polyubiquitination"/>
    <property type="evidence" value="ECO:0000250"/>
    <property type="project" value="UniProtKB"/>
</dbReference>
<dbReference type="GO" id="GO:0030163">
    <property type="term" value="P:protein catabolic process"/>
    <property type="evidence" value="ECO:0000315"/>
    <property type="project" value="MGI"/>
</dbReference>
<dbReference type="GO" id="GO:0070979">
    <property type="term" value="P:protein K11-linked ubiquitination"/>
    <property type="evidence" value="ECO:0000250"/>
    <property type="project" value="UniProtKB"/>
</dbReference>
<dbReference type="GO" id="GO:0044314">
    <property type="term" value="P:protein K27-linked ubiquitination"/>
    <property type="evidence" value="ECO:0000250"/>
    <property type="project" value="UniProtKB"/>
</dbReference>
<dbReference type="GO" id="GO:0070936">
    <property type="term" value="P:protein K48-linked ubiquitination"/>
    <property type="evidence" value="ECO:0000250"/>
    <property type="project" value="UniProtKB"/>
</dbReference>
<dbReference type="GO" id="GO:0050821">
    <property type="term" value="P:protein stabilization"/>
    <property type="evidence" value="ECO:0000315"/>
    <property type="project" value="MGI"/>
</dbReference>
<dbReference type="GO" id="GO:0006979">
    <property type="term" value="P:response to oxidative stress"/>
    <property type="evidence" value="ECO:0007669"/>
    <property type="project" value="Ensembl"/>
</dbReference>
<dbReference type="GO" id="GO:0006511">
    <property type="term" value="P:ubiquitin-dependent protein catabolic process"/>
    <property type="evidence" value="ECO:0000250"/>
    <property type="project" value="UniProtKB"/>
</dbReference>
<dbReference type="GO" id="GO:0071596">
    <property type="term" value="P:ubiquitin-dependent protein catabolic process via the N-end rule pathway"/>
    <property type="evidence" value="ECO:0000314"/>
    <property type="project" value="UniProtKB"/>
</dbReference>
<dbReference type="CDD" id="cd19680">
    <property type="entry name" value="UBR-box_UBR4"/>
    <property type="match status" value="1"/>
</dbReference>
<dbReference type="InterPro" id="IPR016024">
    <property type="entry name" value="ARM-type_fold"/>
</dbReference>
<dbReference type="InterPro" id="IPR025704">
    <property type="entry name" value="E3_Ub_ligase_UBR4_C"/>
</dbReference>
<dbReference type="InterPro" id="IPR045841">
    <property type="entry name" value="E3_UBR4_N"/>
</dbReference>
<dbReference type="InterPro" id="IPR045189">
    <property type="entry name" value="UBR4-like"/>
</dbReference>
<dbReference type="InterPro" id="IPR056530">
    <property type="entry name" value="UBR4-like_dom"/>
</dbReference>
<dbReference type="InterPro" id="IPR047509">
    <property type="entry name" value="UBR4-like_UBR-box"/>
</dbReference>
<dbReference type="InterPro" id="IPR036322">
    <property type="entry name" value="WD40_repeat_dom_sf"/>
</dbReference>
<dbReference type="InterPro" id="IPR003126">
    <property type="entry name" value="Znf_UBR"/>
</dbReference>
<dbReference type="PANTHER" id="PTHR21725">
    <property type="entry name" value="E3 UBIQUITIN-PROTEIN LIGASE UBR4"/>
    <property type="match status" value="1"/>
</dbReference>
<dbReference type="PANTHER" id="PTHR21725:SF1">
    <property type="entry name" value="E3 UBIQUITIN-PROTEIN LIGASE UBR4"/>
    <property type="match status" value="1"/>
</dbReference>
<dbReference type="Pfam" id="PF13764">
    <property type="entry name" value="E3_UbLigase_R4"/>
    <property type="match status" value="1"/>
</dbReference>
<dbReference type="Pfam" id="PF19423">
    <property type="entry name" value="E3_UBR4_N"/>
    <property type="match status" value="1"/>
</dbReference>
<dbReference type="Pfam" id="PF24079">
    <property type="entry name" value="UBR4"/>
    <property type="match status" value="1"/>
</dbReference>
<dbReference type="Pfam" id="PF02207">
    <property type="entry name" value="zf-UBR"/>
    <property type="match status" value="1"/>
</dbReference>
<dbReference type="SMART" id="SM00396">
    <property type="entry name" value="ZnF_UBR1"/>
    <property type="match status" value="1"/>
</dbReference>
<dbReference type="SUPFAM" id="SSF48371">
    <property type="entry name" value="ARM repeat"/>
    <property type="match status" value="1"/>
</dbReference>
<dbReference type="SUPFAM" id="SSF50978">
    <property type="entry name" value="WD40 repeat-like"/>
    <property type="match status" value="1"/>
</dbReference>
<dbReference type="PROSITE" id="PS52043">
    <property type="entry name" value="UBR4_E3"/>
    <property type="match status" value="1"/>
</dbReference>
<dbReference type="PROSITE" id="PS51157">
    <property type="entry name" value="ZF_UBR"/>
    <property type="match status" value="1"/>
</dbReference>
<keyword id="KW-0007">Acetylation</keyword>
<keyword id="KW-0025">Alternative splicing</keyword>
<keyword id="KW-0112">Calmodulin-binding</keyword>
<keyword id="KW-0963">Cytoplasm</keyword>
<keyword id="KW-0206">Cytoskeleton</keyword>
<keyword id="KW-0967">Endosome</keyword>
<keyword id="KW-0479">Metal-binding</keyword>
<keyword id="KW-0539">Nucleus</keyword>
<keyword id="KW-0597">Phosphoprotein</keyword>
<keyword id="KW-1185">Reference proteome</keyword>
<keyword id="KW-0808">Transferase</keyword>
<keyword id="KW-0833">Ubl conjugation pathway</keyword>
<keyword id="KW-0862">Zinc</keyword>
<keyword id="KW-0863">Zinc-finger</keyword>
<comment type="function">
    <text evidence="2 6 7 9">E3 ubiquitin-protein ligase involved in different protein quality control pathways in the cytoplasm (PubMed:16055722, PubMed:19008229, PubMed:30111582). Component of the N-end rule pathway: ubiquitinates proteins bearing specific N-terminal residues that are destabilizing according to the N-end rule, leading to their degradation (PubMed:16055722, PubMed:19008229). Recognizes both type-1 and type-2 N-degrons, containing positively charged amino acids (Arg, Lys and His) and bulky and hydrophobic amino acids, respectively (PubMed:16055722, PubMed:19008229). Does not ubiquitinate proteins that are acetylated at the N-terminus (By similarity). Together with UBR5, part of a cytoplasm protein quality control pathway that prevents protein aggregation by catalyzing assembly of heterotypic 'Lys-11'-/'Lys-48'-linked branched ubiquitin chains on aggregated proteins, leading to substrate recognition by the segregase p97/VCP and degradation by the proteasome: UBR4 probably synthesizes mixed chains containing multiple linkages, while UBR5 is likely branching multiple 'Lys-48'-linked chains of substrates initially modified (By similarity). Together with KCMF1, part of a protein quality control pathway that catalyzes ubiquitination and degradation of proteins that have been oxidized in response to reactive oxygen species (ROS): recognizes proteins with an Arg-CysO3(H) degron at the N-terminus, and mediates assembly of heterotypic 'Lys-63'-/'Lys-27'-linked branched ubiquitin chains on oxidized proteins, leading to their degradation by autophagy (By similarity). Catalytic component of the SIFI complex, a multiprotein complex required to inhibit the mitochondrial stress response after a specific stress event has been resolved: ubiquitinates and degrades (1) components of the HRI-mediated signaling of the integrated stress response, such as DELE1 and EIF2AK1/HRI, as well as (2) unimported mitochondrial precursors (By similarity). Within the SIFI complex, UBR4 initiates ubiquitin chain that are further elongated or branched by KCMF1 (By similarity). Mediates ubiquitination of ACLY, leading to its subsequent degradation (By similarity). Together with clathrin, forms meshwork structures involved in membrane morphogenesis and cytoskeletal organization (By similarity).</text>
</comment>
<comment type="catalytic activity">
    <reaction evidence="7">
        <text>S-ubiquitinyl-[E2 ubiquitin-conjugating enzyme]-L-cysteine + [acceptor protein]-L-lysine = [E2 ubiquitin-conjugating enzyme]-L-cysteine + N(6)-ubiquitinyl-[acceptor protein]-L-lysine.</text>
        <dbReference type="EC" id="2.3.2.27"/>
    </reaction>
</comment>
<comment type="pathway">
    <text evidence="6 7">Protein modification; protein ubiquitination.</text>
</comment>
<comment type="subunit">
    <text evidence="2">Component of the SIFI complex, composed of KCMF1, UBR4 and calmodulin (CALM1, CALM2 or CALM3) (By similarity). Interacts with E2 conjugating enzymes UBE2A and UBE2B (By similarity). Interacts with RB1 (By similarity).</text>
</comment>
<comment type="interaction">
    <interactant intactId="EBI-4285947">
        <id>A2AN08</id>
    </interactant>
    <interactant intactId="EBI-7730971">
        <id>P06933</id>
        <label>E7</label>
    </interactant>
    <organismsDiffer>true</organismsDiffer>
    <experiments>2</experiments>
</comment>
<comment type="subcellular location">
    <subcellularLocation>
        <location evidence="2">Cytoplasm</location>
    </subcellularLocation>
    <subcellularLocation>
        <location evidence="2">Cytoplasm</location>
        <location evidence="2">Cytoskeleton</location>
    </subcellularLocation>
    <subcellularLocation>
        <location evidence="9">Endosome</location>
    </subcellularLocation>
    <subcellularLocation>
        <location evidence="2">Nucleus</location>
    </subcellularLocation>
    <text evidence="2 9">Localizes to endosomes via its association with calcium-bound calmodulin (PubMed:30111582). Concentrates at the leading edge of membrane structures involved in actin motility (By similarity).</text>
</comment>
<comment type="alternative products">
    <event type="alternative splicing"/>
    <isoform>
        <id>A2AN08-1</id>
        <name>1</name>
        <sequence type="displayed"/>
    </isoform>
    <isoform>
        <id>A2AN08-2</id>
        <name>2</name>
        <sequence type="described" ref="VSP_025210"/>
    </isoform>
    <isoform>
        <id>A2AN08-3</id>
        <name>3</name>
        <sequence type="described" ref="VSP_025213 VSP_025215"/>
    </isoform>
    <isoform>
        <id>A2AN08-4</id>
        <name>4</name>
        <sequence type="described" ref="VSP_025211 VSP_025212"/>
    </isoform>
    <isoform>
        <id>A2AN08-5</id>
        <name>5</name>
        <sequence type="described" ref="VSP_025214"/>
    </isoform>
</comment>
<comment type="tissue specificity">
    <text evidence="6">Widely expressed in adult and embryonic stages with highest levels in testis and brain.</text>
</comment>
<comment type="domain">
    <text evidence="2 7">The UBR-type zinc finger forms a pocket that mediates recognition of type 1 N-degrons (PubMed:19008229). It can also recognize type-2 N-degrons via two phenylalanines, Phe-1670 and Phe-1712, on its hydrophobic surface (By similarity). In addition to substrate-binding, the UBR-type zinc finger probably positions substrate proteins in the proximity of the bound and activated E2-ubiquitin conjugate to enable their ubiquitination (By similarity).</text>
</comment>
<comment type="domain">
    <text evidence="2">Constitutes an atypical E3 ubiquitin-protein ligase composed of a hemiRING-type zinc finger, a UBR-type zinc-finger interacting subdomain (UZI) and an N-terminal region that can serve as an affinity factor for the E2 conjugating enzymes UBE2A and UBE2B (By similarity). Compared to classical RING-type, the hemiRING-type only binds a single zinc ion: a hydrogen bonding network is present instead of a second zinc ion (By similarity). The hemiRING-type zinc finger maintains specificity for E2 conjugating enzymes UBE2A and UBE2B, which have high intrinsic lysine reactivity, obviating the need for the robust thioester activation of classical RING-type E3 ubiquitin-protein ligases (By similarity).</text>
</comment>
<comment type="disruption phenotype">
    <text evidence="8 9">Embryonic lethality (PubMed:23431188). Embryos display pleiotropic abnormalities, including impaired vascular development in the yolk sac (PubMed:23431188). Impaired trafficking and proteolysis of endocytosed protein cargos in the yolk sac of embyros (PubMed:30111582).</text>
</comment>
<comment type="similarity">
    <text evidence="13">Belongs to the UBR4 family.</text>
</comment>
<comment type="sequence caution" evidence="13">
    <conflict type="erroneous initiation">
        <sequence resource="EMBL-CDS" id="BAC39609"/>
    </conflict>
</comment>
<gene>
    <name evidence="10 14" type="primary">Ubr4</name>
    <name evidence="12" type="synonym">Kiaa0462</name>
</gene>
<evidence type="ECO:0000250" key="1">
    <source>
        <dbReference type="UniProtKB" id="Q2TL32"/>
    </source>
</evidence>
<evidence type="ECO:0000250" key="2">
    <source>
        <dbReference type="UniProtKB" id="Q5T4S7"/>
    </source>
</evidence>
<evidence type="ECO:0000255" key="3">
    <source>
        <dbReference type="PROSITE-ProRule" id="PRU00508"/>
    </source>
</evidence>
<evidence type="ECO:0000255" key="4">
    <source>
        <dbReference type="PROSITE-ProRule" id="PRU01388"/>
    </source>
</evidence>
<evidence type="ECO:0000256" key="5">
    <source>
        <dbReference type="SAM" id="MobiDB-lite"/>
    </source>
</evidence>
<evidence type="ECO:0000269" key="6">
    <source>
    </source>
</evidence>
<evidence type="ECO:0000269" key="7">
    <source>
    </source>
</evidence>
<evidence type="ECO:0000269" key="8">
    <source>
    </source>
</evidence>
<evidence type="ECO:0000269" key="9">
    <source>
    </source>
</evidence>
<evidence type="ECO:0000303" key="10">
    <source>
    </source>
</evidence>
<evidence type="ECO:0000303" key="11">
    <source>
    </source>
</evidence>
<evidence type="ECO:0000303" key="12">
    <source ref="3"/>
</evidence>
<evidence type="ECO:0000305" key="13"/>
<evidence type="ECO:0000312" key="14">
    <source>
        <dbReference type="MGI" id="MGI:1916366"/>
    </source>
</evidence>
<evidence type="ECO:0007744" key="15">
    <source>
    </source>
</evidence>
<sequence length="5180" mass="572290">MATSGGEEAAAAAPAPGAPATGQDTTPGWEVAVRPLLSASYSAFEMKELPQLVASVIESESEILHHEKQYEPFYSSFVALSTHYITTVCSLIPRNQLQSVAAACKVLIEFSLLRLENPDEACAVSQKHLILLIKGLCTGCSRLDRTEIITFTAMMKSAKLPQTVKTLSDVEDQKELASPVSPELRQKEVQMNFLNQLTSVFNPRTVPSPPISPQALVEGENDEQSSPDQVSAAKTKSVFIAQNVASLQELGGSEKLLRVCLNLPYFLRYINRFQDAVVANSFFIMPATVADATAVRNGFHSLVIDVTMALDTLSLPVLEPLNPSRLQDVTVLSLSCLYAGVSVATCMAILHVGSAQQVRTGSTSSKEDDYESDAATIVQKCLEIYDMIGQAISSSRRAGGEHFQNFQLLGAWCLLNSLFLILNLSPTALADKGKEKDPLAALRVRDILSRTKEGVGSPKLGPGKGHQGFGVLSVILANHAIKLLASLFQDLQVEALHKGWETDGPPAVLSIMAQSTSTQRIQRLIDSVPLTNLLLTLLSTSYRKACVLQRQRKGSMSSDASASTDSNTYYEDDFSSTEEDSSQDDDSEPILGQWFEETISPSKEKAAPPPPPPPPPLESSPRVKSPNKQASGEKGNILASRKDPELFSGLASNILNFITTSMLNSRNSFIRSYLSASLSEHHMATLASIIKEVDKDGLKGSSDEDFAAALYHFNHSLVTSDLQSPNLQNTLLQQLGVAPFSEGPWPLYIHPQGLSVLSRLLLIWQHKAGAQGDPDVPECLKVWDRFLTTMKQNALQGVVPSETEDLNVEHLQLLLLIFHSFSEKGRRAILTMLVQSIQELSVNMEVQMRTAPLILARLLLIFDYLLHQYSKAPVYLFEQVQHNLLSPPFGWASGSQDSSSRRANTPLYHGFKEVEENWSKHFSSDAAPQPRFYCVLSTEASEEDLNRLDSEACEVLFSKPVKYDELYSSLTTLLAAGSQLDTTRRKEKKNVTALEACALQYYFLILWRILGILPPSKTYMNQLAMNSPEMSECDILHTLRWSSRLRISSYVSWIKDHLIKQGMKPEHAGSLIELAASKCSSVKYDVEIVEEYFARQISSFCSIDCTAVLQLHEIPSLQSIYTLDAAVSKVQVSLDEHFSKMAAETDPHKSSEITKNLLPATLQLIDTYASFTRAYLLQNLNEEGSTEKPSQEKLHGFAAVLAIGSSRCKANTLGPTLVQNLPSSVQSVCESWNNINTNEFPNIGSWRNAFANDTIPSESYISAVQAAHLGTLCGQSLPLAASLKHTLLSLVRLTGDLIVWSDEMNPAQVIRTLLPLLLESSTESAAEISSNSLERILGPAESDEFLARVYEKLITGCYNILANHADPNSGLDESILEECLQYLEKQLESSQARKAMEEFFSDGGELVQIMMATANEDLSAKFCNRVLKFFTKLFQLTEKSPNPSLLHLCGSLAQLACVEPVRLQAWLTRMTTSPPKDSDQLEVIQENRQLLQLLTTYIVRENSQVGEGVCAVLLGTLTPMATDMLANGDGTGFPELMVVMATLASAGQGAGHLQLHNAAVDWLGRCKKYLSQKNVVEKLNANVMHGKHVMVLECTCHIMSYLADVTNALSQSNGQGPSHLSVDGEERAIEVDSDWVEELAVEEEDSQAEDSDEDSLCNKLCTFTITQKEFMNQHWYHCHTCKMVDGVGVCTVCAKVCHKDHEISYAKYGSFFCDCGAKEDGSCLALVKRTPSSGMSSTMKESAFQSEPRVSESLVRHASTSPADKAKVTISDGKVTDEEKPKKSSLCRTVEGCREELQNQANFSFAPLVLDMLSFLMDAIQTNFQQASAVGSSSRAQQALSELHTVDKGVEMTDQLMVPTLGSQEGAFENVRMNYSGDQGQTIRQLISAHVLRRVAMCVLSSPHGRRQHLAVSHEKGKITVLQLSALLKQADSSKRKLTLTRLASAPVPFTVLSLTGNPCKEDYLAVCGLKDCHVLTFSSSGSVSDHLVLHPQLATGNFIIKAVWLPGSQTELAIVTADFVKIYDLSIDALSPTFYFLLPSSKIRDVTFLFNEEGKNIIVIMSSAGYMYTQLMEEASSAQQGPFYVTNVLEINHEDLKDSNSQVAGGGVSVYYSHVLQMLFFSYSQGRSFAATVSRSTLEVLQLFPINIKSSNGGSKTSPALCQWSEVMNHPGLVCCVQQTTGVPLVVMVKPGTFLIQEIKTLPAKAKIQDMVAIRHTACNEQQRTTMILLCEDGSLRIYMANVENTSYWLQPSLQPSSVISIMKPVRKRKTATITARTSSQVTFPIDFFEHNQQLTDVEFGGNDLLQVYNAQQIKHRLNSTGMYVANTKPGGFTIEISNNSSTMVMTGMRIQIGTQAIERAPSYIEIFGRTMQLNLSRSRWFDFPFTREEALQADRKLSLFIGASVDPAGVTMIDAVKIYGKTKEQFGWPDEPPEDFPSASVSNICPPNLNQSNGTGESDSAAPATTSGTVLERLVVSSLEALESCFAVGPIIEKERNKHAAQELATLLLSLPAPASVQQQSKSLLASLHSSRSAYHSHKDQALLSKAVQCLNTSSKEGKDLDPEVFQRLVITARSIAVTRPNNLVHFTESKLPQMETEGADEGKEPQKQEGDGCSFITQLVNHFWKLHASKPKNAFLAPACLPGLTHIEATVNALVDIIHGYCTCELDCINTASKIYMQMLLCPDPAVSFSCKQALIRVLRPRNKRRHVTLPSSPRSNTPMGDKDDDDDDDADEKMQSSGIPDGGHIRQESQEQSEVDHGDFEMVSESMVLETAENVNNGNPSPLEALLAGAEGFPPMLDIPPDADDETMVELAIALSLQQDQQGSSSSALGLQSLGLSGQAPSSSSLDAGTLSDTTASAPASDDEGSTAATDGSTLRTSPADHGGSVGSESGGSAVDSVAGEHSVSGRSSAYGDATAEGHPAGPGSVSSSTGAISTATGHQEGDGSEGEGEGEAEGDVHTSNRLHMVRLMLLERLLQTLPQLRNVGGVRAIPYMQVILMLTTDLDGEDEKDKGALDNLLAQLIAELGMDKKDVSKKNERSALNEVHLVVMRLLSVFMSRTKSGSKSSICESSSLISSATAAALLSSGAVDYCLHVLKSLLEYWKSQQSDEEPVAASQLLKPHTTSSPPDMSPFFLRQYVKGHAADVFEAYTQLLTEMVLRLPYQIKKIADTSSRIPPPVFDHSWFYFLSEYLMIQQTPFVRRQVRKLLLFICGSKEKYRQLRDLHTLDSHVRGIKKLLEEQGIFLRASVVTASSGSALQYDTLISLMEHLKACAEIAAQRTINWQKFCIKDDSVLYFLLQVSFLVDEGVSPVLLQLLSCALCGSKVLAALAASTGSSSVASSSAPPAASSGQATTQSKSSTKKSKKEEKEKEKEGESSGSQEDQLCTALVNQLNRFADKETLIQFLRCFLLESNSSSVRWQAHCLTLHIYRNSNKAQQELLLDLMWSIWPELPAYGRKAAQFVDLLGYFSLKTAQTEKKLKEYSQKAVEILRTQNHILTNHPNSNIYNTLSGLVEFDGYYLESDPCLVCNNPEVPFCYIKLSSIKVDTRYTTTQQVVKLIGSHTISKVTVKIGDLKRTKMVRTINLYYNNRTVQAIVELKNKPARWHKAKKVQLTPGQTEVKIDLPLPIVASNLMIEFADFYENYQASTETLQCPRCSASVPANPGVCGNCGENVYQCHKCRSINYDEKDPFLCNACGFCKYARFDFMLYAKPCCAVDPIENEEDRKKAVSNINTLLDKADRVYHQLMGHRPQLENLLCKVNEAAPEKPQEDSGTAGGISSTSASVNRYILQLAQEYCGDCKNSFDELSKIIQKVFASRKELLEYDLQQREAATKSSRTSVQPTFTASQYRALSVLGCGHTSSTKCYGCASAVTEHCITLLRALATNPALRHILVSQGLIRELFDYNLRRGAAAIREEVRQLMCLLTRDNPEATQQMNDLIIGKVSTALKGHWANPDLASSLQYEMLLLTDSISKEDSCWELRLRCALSLFLMAVNIKTPVVVENITLMCLRILQKLIKPPAPTSKKNKDVPVEALTTVKPYCNEIHAQAQLWLKRDPKASYEAWKKCLPIRGVDGNGKSPSKSELHRLYLTEKYVWRWKQFLSRRGKRTTPLDLKLGHNNWLRQVLFTPATQAARQAACTIVEALATVPSRKQQVLDLLTSYLDELSVAGECAAEYLALYQKLIASCHWKVYLAARGVLPYVGNLITKEIARLLALEEATLSTDLQQGYALKSLTGLLSSFVEVESIKRHFKSRLVGTVLNGYLCLRKLVLQRTKLIDETQDMLLEMLEDMTTGTESETKAFMAVCIETAKRYNLDDYRTPVFIFERLCSIIYPEENEVTEFFVTLEKDPQQEDFLQGRMPGNPYSSNEPGIGPLMRDIKNKICQDCDLVALLEDDSGMELLVNNKIISLDLPVAEVYKKVWCATNEGEPMRIVYRMRGLLGDATEEFIESLDSTTDEEEDEEEVYRMAGVMAQCGGLQCMLNRLAGVKDFKQGRHLLTVLLKLFSYCVKVKVNRQQLVKLETNTLNVMLGTLNLALVAEQESKDSGGAAVAEQVLSIMEIILDESNAEPLSEDKGNLLLTGDKDQLVMLLDQINSTFVRSNPSVLQGLLRIIPYLSFGEVEKMQILVERFKPYCSFEKYDEDHSGDDKVFLDCFCKIAAGIKNNSNGHQLKDLILQKGITQNALDYMKKHIPSAKNLDADIWKKFLSRPALPFILRLLRGLAMQHPATQVLIGTDSITSLHKLEQVSSDEGIGTLAENLLEALREHPDVNKKIDAARRETRAEKKRMAMAMRQKALGTLGMTTNEKGQVVTKTALLKQMEELIEEPGLTCCICREGYKFQPTKVLGIYTFTKRVALEEMENKPRKQQGYSTVSHFNIVHYDCHLAAVRLARGREEWESAALQNANTKCNGLLPVWGPHVPESAFATCLARHNTYLQECTGQREPTYQLNIHDIKLLFLRFAMEQSFSADTGGGGRESNIHLIPYIIHTVLYVLNTTRATSREEKNLQGFLEQPKEKWTESAFDVDGPHYFTILALHVLPPEQWKAIRVEILRRLLVASHARAVAPGGATRLTDKAVKDYSAYRSSLLFWALVDLIYNMFKKVPTSNTEGGWSCSLAEYIRHNDMPIYEAADKALKTFQEEFMPVETFSEFLDAAGLLSEITDPESFLKDLLNSVP</sequence>
<name>UBR4_MOUSE</name>
<accession>A2AN08</accession>
<accession>A2AN07</accession>
<accession>A2AN09</accession>
<accession>A2AN10</accession>
<accession>A2AN11</accession>
<accession>Q52KI4</accession>
<accession>Q6PB49</accession>
<accession>Q6PFC7</accession>
<accession>Q80Y11</accession>
<accession>Q8BGB9</accession>
<accession>Q8C3E8</accession>
<accession>Q8C4W5</accession>
<accession>Q8C8X7</accession>
<accession>Q8CGE0</accession>
<accession>Q8CHF3</accession>
<proteinExistence type="evidence at protein level"/>
<protein>
    <recommendedName>
        <fullName>E3 ubiquitin-protein ligase UBR4</fullName>
        <ecNumber evidence="7">2.3.2.27</ecNumber>
    </recommendedName>
    <alternativeName>
        <fullName>N-recognin-4</fullName>
    </alternativeName>
</protein>
<reference key="1">
    <citation type="journal article" date="2005" name="Science">
        <title>The transcriptional landscape of the mammalian genome.</title>
        <authorList>
            <person name="Carninci P."/>
            <person name="Kasukawa T."/>
            <person name="Katayama S."/>
            <person name="Gough J."/>
            <person name="Frith M.C."/>
            <person name="Maeda N."/>
            <person name="Oyama R."/>
            <person name="Ravasi T."/>
            <person name="Lenhard B."/>
            <person name="Wells C."/>
            <person name="Kodzius R."/>
            <person name="Shimokawa K."/>
            <person name="Bajic V.B."/>
            <person name="Brenner S.E."/>
            <person name="Batalov S."/>
            <person name="Forrest A.R."/>
            <person name="Zavolan M."/>
            <person name="Davis M.J."/>
            <person name="Wilming L.G."/>
            <person name="Aidinis V."/>
            <person name="Allen J.E."/>
            <person name="Ambesi-Impiombato A."/>
            <person name="Apweiler R."/>
            <person name="Aturaliya R.N."/>
            <person name="Bailey T.L."/>
            <person name="Bansal M."/>
            <person name="Baxter L."/>
            <person name="Beisel K.W."/>
            <person name="Bersano T."/>
            <person name="Bono H."/>
            <person name="Chalk A.M."/>
            <person name="Chiu K.P."/>
            <person name="Choudhary V."/>
            <person name="Christoffels A."/>
            <person name="Clutterbuck D.R."/>
            <person name="Crowe M.L."/>
            <person name="Dalla E."/>
            <person name="Dalrymple B.P."/>
            <person name="de Bono B."/>
            <person name="Della Gatta G."/>
            <person name="di Bernardo D."/>
            <person name="Down T."/>
            <person name="Engstrom P."/>
            <person name="Fagiolini M."/>
            <person name="Faulkner G."/>
            <person name="Fletcher C.F."/>
            <person name="Fukushima T."/>
            <person name="Furuno M."/>
            <person name="Futaki S."/>
            <person name="Gariboldi M."/>
            <person name="Georgii-Hemming P."/>
            <person name="Gingeras T.R."/>
            <person name="Gojobori T."/>
            <person name="Green R.E."/>
            <person name="Gustincich S."/>
            <person name="Harbers M."/>
            <person name="Hayashi Y."/>
            <person name="Hensch T.K."/>
            <person name="Hirokawa N."/>
            <person name="Hill D."/>
            <person name="Huminiecki L."/>
            <person name="Iacono M."/>
            <person name="Ikeo K."/>
            <person name="Iwama A."/>
            <person name="Ishikawa T."/>
            <person name="Jakt M."/>
            <person name="Kanapin A."/>
            <person name="Katoh M."/>
            <person name="Kawasawa Y."/>
            <person name="Kelso J."/>
            <person name="Kitamura H."/>
            <person name="Kitano H."/>
            <person name="Kollias G."/>
            <person name="Krishnan S.P."/>
            <person name="Kruger A."/>
            <person name="Kummerfeld S.K."/>
            <person name="Kurochkin I.V."/>
            <person name="Lareau L.F."/>
            <person name="Lazarevic D."/>
            <person name="Lipovich L."/>
            <person name="Liu J."/>
            <person name="Liuni S."/>
            <person name="McWilliam S."/>
            <person name="Madan Babu M."/>
            <person name="Madera M."/>
            <person name="Marchionni L."/>
            <person name="Matsuda H."/>
            <person name="Matsuzawa S."/>
            <person name="Miki H."/>
            <person name="Mignone F."/>
            <person name="Miyake S."/>
            <person name="Morris K."/>
            <person name="Mottagui-Tabar S."/>
            <person name="Mulder N."/>
            <person name="Nakano N."/>
            <person name="Nakauchi H."/>
            <person name="Ng P."/>
            <person name="Nilsson R."/>
            <person name="Nishiguchi S."/>
            <person name="Nishikawa S."/>
            <person name="Nori F."/>
            <person name="Ohara O."/>
            <person name="Okazaki Y."/>
            <person name="Orlando V."/>
            <person name="Pang K.C."/>
            <person name="Pavan W.J."/>
            <person name="Pavesi G."/>
            <person name="Pesole G."/>
            <person name="Petrovsky N."/>
            <person name="Piazza S."/>
            <person name="Reed J."/>
            <person name="Reid J.F."/>
            <person name="Ring B.Z."/>
            <person name="Ringwald M."/>
            <person name="Rost B."/>
            <person name="Ruan Y."/>
            <person name="Salzberg S.L."/>
            <person name="Sandelin A."/>
            <person name="Schneider C."/>
            <person name="Schoenbach C."/>
            <person name="Sekiguchi K."/>
            <person name="Semple C.A."/>
            <person name="Seno S."/>
            <person name="Sessa L."/>
            <person name="Sheng Y."/>
            <person name="Shibata Y."/>
            <person name="Shimada H."/>
            <person name="Shimada K."/>
            <person name="Silva D."/>
            <person name="Sinclair B."/>
            <person name="Sperling S."/>
            <person name="Stupka E."/>
            <person name="Sugiura K."/>
            <person name="Sultana R."/>
            <person name="Takenaka Y."/>
            <person name="Taki K."/>
            <person name="Tammoja K."/>
            <person name="Tan S.L."/>
            <person name="Tang S."/>
            <person name="Taylor M.S."/>
            <person name="Tegner J."/>
            <person name="Teichmann S.A."/>
            <person name="Ueda H.R."/>
            <person name="van Nimwegen E."/>
            <person name="Verardo R."/>
            <person name="Wei C.L."/>
            <person name="Yagi K."/>
            <person name="Yamanishi H."/>
            <person name="Zabarovsky E."/>
            <person name="Zhu S."/>
            <person name="Zimmer A."/>
            <person name="Hide W."/>
            <person name="Bult C."/>
            <person name="Grimmond S.M."/>
            <person name="Teasdale R.D."/>
            <person name="Liu E.T."/>
            <person name="Brusic V."/>
            <person name="Quackenbush J."/>
            <person name="Wahlestedt C."/>
            <person name="Mattick J.S."/>
            <person name="Hume D.A."/>
            <person name="Kai C."/>
            <person name="Sasaki D."/>
            <person name="Tomaru Y."/>
            <person name="Fukuda S."/>
            <person name="Kanamori-Katayama M."/>
            <person name="Suzuki M."/>
            <person name="Aoki J."/>
            <person name="Arakawa T."/>
            <person name="Iida J."/>
            <person name="Imamura K."/>
            <person name="Itoh M."/>
            <person name="Kato T."/>
            <person name="Kawaji H."/>
            <person name="Kawagashira N."/>
            <person name="Kawashima T."/>
            <person name="Kojima M."/>
            <person name="Kondo S."/>
            <person name="Konno H."/>
            <person name="Nakano K."/>
            <person name="Ninomiya N."/>
            <person name="Nishio T."/>
            <person name="Okada M."/>
            <person name="Plessy C."/>
            <person name="Shibata K."/>
            <person name="Shiraki T."/>
            <person name="Suzuki S."/>
            <person name="Tagami M."/>
            <person name="Waki K."/>
            <person name="Watahiki A."/>
            <person name="Okamura-Oho Y."/>
            <person name="Suzuki H."/>
            <person name="Kawai J."/>
            <person name="Hayashizaki Y."/>
        </authorList>
    </citation>
    <scope>NUCLEOTIDE SEQUENCE [LARGE SCALE MRNA] (ISOFORM 4)</scope>
    <scope>NUCLEOTIDE SEQUENCE [LARGE SCALE MRNA] OF 1-4461 (ISOFORM 2)</scope>
    <scope>NUCLEOTIDE SEQUENCE [LARGE SCALE MRNA] OF 2599-5180 (ISOFORM 1)</scope>
    <source>
        <strain>C57BL/6J</strain>
        <tissue>Cerebellum</tissue>
        <tissue>Embryo</tissue>
        <tissue>Head</tissue>
        <tissue>Retina</tissue>
    </source>
</reference>
<reference key="2">
    <citation type="journal article" date="2009" name="PLoS Biol.">
        <title>Lineage-specific biology revealed by a finished genome assembly of the mouse.</title>
        <authorList>
            <person name="Church D.M."/>
            <person name="Goodstadt L."/>
            <person name="Hillier L.W."/>
            <person name="Zody M.C."/>
            <person name="Goldstein S."/>
            <person name="She X."/>
            <person name="Bult C.J."/>
            <person name="Agarwala R."/>
            <person name="Cherry J.L."/>
            <person name="DiCuccio M."/>
            <person name="Hlavina W."/>
            <person name="Kapustin Y."/>
            <person name="Meric P."/>
            <person name="Maglott D."/>
            <person name="Birtle Z."/>
            <person name="Marques A.C."/>
            <person name="Graves T."/>
            <person name="Zhou S."/>
            <person name="Teague B."/>
            <person name="Potamousis K."/>
            <person name="Churas C."/>
            <person name="Place M."/>
            <person name="Herschleb J."/>
            <person name="Runnheim R."/>
            <person name="Forrest D."/>
            <person name="Amos-Landgraf J."/>
            <person name="Schwartz D.C."/>
            <person name="Cheng Z."/>
            <person name="Lindblad-Toh K."/>
            <person name="Eichler E.E."/>
            <person name="Ponting C.P."/>
        </authorList>
    </citation>
    <scope>NUCLEOTIDE SEQUENCE [LARGE SCALE GENOMIC DNA]</scope>
    <source>
        <strain>C57BL/6J</strain>
    </source>
</reference>
<reference key="3">
    <citation type="submission" date="2002-10" db="EMBL/GenBank/DDBJ databases">
        <authorList>
            <person name="Okazaki N."/>
            <person name="Kikuno R."/>
            <person name="Ohara R."/>
            <person name="Inamoto S."/>
            <person name="Hara Y."/>
            <person name="Nagase T."/>
            <person name="Ohara O."/>
            <person name="Koga H."/>
        </authorList>
    </citation>
    <scope>NUCLEOTIDE SEQUENCE [LARGE SCALE MRNA] OF 1290-3369 (ISOFORM 3)</scope>
    <source>
        <tissue>Brain</tissue>
    </source>
</reference>
<reference key="4">
    <citation type="journal article" date="2004" name="Genome Res.">
        <title>The status, quality, and expansion of the NIH full-length cDNA project: the Mammalian Gene Collection (MGC).</title>
        <authorList>
            <consortium name="The MGC Project Team"/>
        </authorList>
    </citation>
    <scope>NUCLEOTIDE SEQUENCE [LARGE SCALE MRNA] OF 4020-5180</scope>
    <source>
        <strain>C57BL/6J</strain>
        <strain>FVB/N-3</strain>
        <tissue>Brain</tissue>
        <tissue>Eye</tissue>
        <tissue>Mammary tumor</tissue>
    </source>
</reference>
<reference key="5">
    <citation type="journal article" date="2005" name="Mol. Cell. Biol.">
        <title>A family of mammalian E3 ubiquitin ligases that contain the UBR box motif and recognize N-degrons.</title>
        <authorList>
            <person name="Tasaki T."/>
            <person name="Mulder L.C.F."/>
            <person name="Iwamatsu A."/>
            <person name="Lee M.J."/>
            <person name="Davydov I.V."/>
            <person name="Varshavsky A."/>
            <person name="Muesing M."/>
            <person name="Kwon Y.T."/>
        </authorList>
    </citation>
    <scope>FUNCTION</scope>
    <scope>PATHWAY</scope>
    <scope>TISSUE SPECIFICITY</scope>
    <scope>IDENTIFICATION BY MASS SPECTROMETRY</scope>
</reference>
<reference key="6">
    <citation type="journal article" date="2005" name="Proc. Natl. Acad. Sci. U.S.A.">
        <title>Bovine papillomavirus E7 transformation function correlates with cellular p600 protein binding.</title>
        <authorList>
            <person name="DeMasi J."/>
            <person name="Huh K.-W."/>
            <person name="Nakatani Y."/>
            <person name="Muenger K."/>
            <person name="Howley P.M."/>
        </authorList>
    </citation>
    <scope>IDENTIFICATION BY MASS SPECTROMETRY</scope>
</reference>
<reference key="7">
    <citation type="journal article" date="2007" name="Proc. Natl. Acad. Sci. U.S.A.">
        <title>Large-scale phosphorylation analysis of mouse liver.</title>
        <authorList>
            <person name="Villen J."/>
            <person name="Beausoleil S.A."/>
            <person name="Gerber S.A."/>
            <person name="Gygi S.P."/>
        </authorList>
    </citation>
    <scope>IDENTIFICATION BY MASS SPECTROMETRY [LARGE SCALE ANALYSIS]</scope>
    <source>
        <tissue>Liver</tissue>
    </source>
</reference>
<reference key="8">
    <citation type="journal article" date="2009" name="J. Biol. Chem.">
        <title>The substrate recognition domains of the N-end rule pathway.</title>
        <authorList>
            <person name="Tasaki T."/>
            <person name="Zakrzewska A."/>
            <person name="Dudgeon D.D."/>
            <person name="Jiang Y."/>
            <person name="Lazo J.S."/>
            <person name="Kwon Y.T."/>
        </authorList>
    </citation>
    <scope>FUNCTION</scope>
    <scope>CATALYTIC ACTIVITY</scope>
    <scope>PATHWAY</scope>
    <scope>DOMAIN</scope>
</reference>
<reference key="9">
    <citation type="journal article" date="2010" name="Cell">
        <title>A tissue-specific atlas of mouse protein phosphorylation and expression.</title>
        <authorList>
            <person name="Huttlin E.L."/>
            <person name="Jedrychowski M.P."/>
            <person name="Elias J.E."/>
            <person name="Goswami T."/>
            <person name="Rad R."/>
            <person name="Beausoleil S.A."/>
            <person name="Villen J."/>
            <person name="Haas W."/>
            <person name="Sowa M.E."/>
            <person name="Gygi S.P."/>
        </authorList>
    </citation>
    <scope>PHOSPHORYLATION [LARGE SCALE ANALYSIS] AT SER-178; SER-181; SER-212; TYR-370; SER-2719 AND THR-2721</scope>
    <scope>PHOSPHORYLATION [LARGE SCALE ANALYSIS] AT SER-2603 (ISOFORM 5)</scope>
    <scope>IDENTIFICATION BY MASS SPECTROMETRY [LARGE SCALE ANALYSIS]</scope>
    <source>
        <tissue>Brain</tissue>
        <tissue>Brown adipose tissue</tissue>
        <tissue>Heart</tissue>
        <tissue>Kidney</tissue>
        <tissue>Liver</tissue>
        <tissue>Lung</tissue>
        <tissue>Pancreas</tissue>
        <tissue>Spleen</tissue>
        <tissue>Testis</tissue>
    </source>
</reference>
<reference key="10">
    <citation type="journal article" date="2013" name="Proc. Natl. Acad. Sci. U.S.A.">
        <title>UBR box N-recognin-4 (UBR4), an N-recognin of the N-end rule pathway, and its role in yolk sac vascular development and autophagy.</title>
        <authorList>
            <person name="Tasaki T."/>
            <person name="Kim S.T."/>
            <person name="Zakrzewska A."/>
            <person name="Lee B.E."/>
            <person name="Kang M.J."/>
            <person name="Yoo Y.D."/>
            <person name="Cha-Molstad H.J."/>
            <person name="Hwang J."/>
            <person name="Soung N.K."/>
            <person name="Sung K.S."/>
            <person name="Kim S.H."/>
            <person name="Nguyen M.D."/>
            <person name="Sun M."/>
            <person name="Yi E.C."/>
            <person name="Kim B.Y."/>
            <person name="Kwon Y.T."/>
        </authorList>
    </citation>
    <scope>DISRUPTION PHENOTYPE</scope>
</reference>
<reference key="11">
    <citation type="journal article" date="2018" name="J. Cell Sci.">
        <title>The N-recognin UBR4 of the N-end rule pathway is targeted to and required for the biogenesis of the early endosome.</title>
        <authorList>
            <person name="Kim S.T."/>
            <person name="Lee Y.J."/>
            <person name="Tasaki T."/>
            <person name="Mun S.R."/>
            <person name="Hwang J."/>
            <person name="Kang M.J."/>
            <person name="Ganipisetti S."/>
            <person name="Yi E.C."/>
            <person name="Kim B.Y."/>
            <person name="Kwon Y.T."/>
        </authorList>
    </citation>
    <scope>FUNCTION</scope>
    <scope>SUBCELLULAR LOCATION</scope>
    <scope>DISRUPTION PHENOTYPE</scope>
</reference>
<organism>
    <name type="scientific">Mus musculus</name>
    <name type="common">Mouse</name>
    <dbReference type="NCBI Taxonomy" id="10090"/>
    <lineage>
        <taxon>Eukaryota</taxon>
        <taxon>Metazoa</taxon>
        <taxon>Chordata</taxon>
        <taxon>Craniata</taxon>
        <taxon>Vertebrata</taxon>
        <taxon>Euteleostomi</taxon>
        <taxon>Mammalia</taxon>
        <taxon>Eutheria</taxon>
        <taxon>Euarchontoglires</taxon>
        <taxon>Glires</taxon>
        <taxon>Rodentia</taxon>
        <taxon>Myomorpha</taxon>
        <taxon>Muroidea</taxon>
        <taxon>Muridae</taxon>
        <taxon>Murinae</taxon>
        <taxon>Mus</taxon>
        <taxon>Mus</taxon>
    </lineage>
</organism>